<proteinExistence type="inferred from homology"/>
<feature type="chain" id="PRO_1000004581" description="Translation initiation factor IF-3">
    <location>
        <begin position="1"/>
        <end position="220"/>
    </location>
</feature>
<feature type="region of interest" description="Disordered" evidence="2">
    <location>
        <begin position="182"/>
        <end position="220"/>
    </location>
</feature>
<feature type="compositionally biased region" description="Basic and acidic residues" evidence="2">
    <location>
        <begin position="185"/>
        <end position="194"/>
    </location>
</feature>
<evidence type="ECO:0000255" key="1">
    <source>
        <dbReference type="HAMAP-Rule" id="MF_00080"/>
    </source>
</evidence>
<evidence type="ECO:0000256" key="2">
    <source>
        <dbReference type="SAM" id="MobiDB-lite"/>
    </source>
</evidence>
<organism>
    <name type="scientific">Synechococcus sp. (strain WH7803)</name>
    <dbReference type="NCBI Taxonomy" id="32051"/>
    <lineage>
        <taxon>Bacteria</taxon>
        <taxon>Bacillati</taxon>
        <taxon>Cyanobacteriota</taxon>
        <taxon>Cyanophyceae</taxon>
        <taxon>Synechococcales</taxon>
        <taxon>Synechococcaceae</taxon>
        <taxon>Synechococcus</taxon>
    </lineage>
</organism>
<accession>A5GI06</accession>
<reference key="1">
    <citation type="submission" date="2006-05" db="EMBL/GenBank/DDBJ databases">
        <authorList>
            <consortium name="Genoscope"/>
        </authorList>
    </citation>
    <scope>NUCLEOTIDE SEQUENCE [LARGE SCALE GENOMIC DNA]</scope>
    <source>
        <strain>WH7803</strain>
    </source>
</reference>
<gene>
    <name evidence="1" type="primary">infC</name>
    <name type="ordered locus">SynWH7803_0145</name>
</gene>
<name>IF3_SYNPW</name>
<dbReference type="EMBL" id="CT971583">
    <property type="protein sequence ID" value="CAK22571.1"/>
    <property type="molecule type" value="Genomic_DNA"/>
</dbReference>
<dbReference type="SMR" id="A5GI06"/>
<dbReference type="STRING" id="32051.SynWH7803_0145"/>
<dbReference type="KEGG" id="syx:SynWH7803_0145"/>
<dbReference type="eggNOG" id="COG0290">
    <property type="taxonomic scope" value="Bacteria"/>
</dbReference>
<dbReference type="HOGENOM" id="CLU_054919_3_1_3"/>
<dbReference type="OrthoDB" id="9806014at2"/>
<dbReference type="Proteomes" id="UP000001566">
    <property type="component" value="Chromosome"/>
</dbReference>
<dbReference type="GO" id="GO:0005829">
    <property type="term" value="C:cytosol"/>
    <property type="evidence" value="ECO:0007669"/>
    <property type="project" value="TreeGrafter"/>
</dbReference>
<dbReference type="GO" id="GO:0016020">
    <property type="term" value="C:membrane"/>
    <property type="evidence" value="ECO:0007669"/>
    <property type="project" value="TreeGrafter"/>
</dbReference>
<dbReference type="GO" id="GO:0043022">
    <property type="term" value="F:ribosome binding"/>
    <property type="evidence" value="ECO:0007669"/>
    <property type="project" value="TreeGrafter"/>
</dbReference>
<dbReference type="GO" id="GO:0003743">
    <property type="term" value="F:translation initiation factor activity"/>
    <property type="evidence" value="ECO:0007669"/>
    <property type="project" value="UniProtKB-UniRule"/>
</dbReference>
<dbReference type="GO" id="GO:0032790">
    <property type="term" value="P:ribosome disassembly"/>
    <property type="evidence" value="ECO:0007669"/>
    <property type="project" value="TreeGrafter"/>
</dbReference>
<dbReference type="FunFam" id="3.10.20.80:FF:000001">
    <property type="entry name" value="Translation initiation factor IF-3"/>
    <property type="match status" value="1"/>
</dbReference>
<dbReference type="FunFam" id="3.30.110.10:FF:000001">
    <property type="entry name" value="Translation initiation factor IF-3"/>
    <property type="match status" value="1"/>
</dbReference>
<dbReference type="Gene3D" id="3.30.110.10">
    <property type="entry name" value="Translation initiation factor 3 (IF-3), C-terminal domain"/>
    <property type="match status" value="1"/>
</dbReference>
<dbReference type="Gene3D" id="3.10.20.80">
    <property type="entry name" value="Translation initiation factor 3 (IF-3), N-terminal domain"/>
    <property type="match status" value="1"/>
</dbReference>
<dbReference type="HAMAP" id="MF_00080">
    <property type="entry name" value="IF_3"/>
    <property type="match status" value="1"/>
</dbReference>
<dbReference type="InterPro" id="IPR036788">
    <property type="entry name" value="T_IF-3_C_sf"/>
</dbReference>
<dbReference type="InterPro" id="IPR036787">
    <property type="entry name" value="T_IF-3_N_sf"/>
</dbReference>
<dbReference type="InterPro" id="IPR019813">
    <property type="entry name" value="Translation_initiation_fac3_CS"/>
</dbReference>
<dbReference type="InterPro" id="IPR001288">
    <property type="entry name" value="Translation_initiation_fac_3"/>
</dbReference>
<dbReference type="InterPro" id="IPR019815">
    <property type="entry name" value="Translation_initiation_fac_3_C"/>
</dbReference>
<dbReference type="InterPro" id="IPR019814">
    <property type="entry name" value="Translation_initiation_fac_3_N"/>
</dbReference>
<dbReference type="NCBIfam" id="TIGR00168">
    <property type="entry name" value="infC"/>
    <property type="match status" value="1"/>
</dbReference>
<dbReference type="PANTHER" id="PTHR10938">
    <property type="entry name" value="TRANSLATION INITIATION FACTOR IF-3"/>
    <property type="match status" value="1"/>
</dbReference>
<dbReference type="PANTHER" id="PTHR10938:SF0">
    <property type="entry name" value="TRANSLATION INITIATION FACTOR IF-3, MITOCHONDRIAL"/>
    <property type="match status" value="1"/>
</dbReference>
<dbReference type="Pfam" id="PF00707">
    <property type="entry name" value="IF3_C"/>
    <property type="match status" value="1"/>
</dbReference>
<dbReference type="Pfam" id="PF05198">
    <property type="entry name" value="IF3_N"/>
    <property type="match status" value="1"/>
</dbReference>
<dbReference type="SUPFAM" id="SSF55200">
    <property type="entry name" value="Translation initiation factor IF3, C-terminal domain"/>
    <property type="match status" value="1"/>
</dbReference>
<dbReference type="SUPFAM" id="SSF54364">
    <property type="entry name" value="Translation initiation factor IF3, N-terminal domain"/>
    <property type="match status" value="1"/>
</dbReference>
<dbReference type="PROSITE" id="PS00938">
    <property type="entry name" value="IF3"/>
    <property type="match status" value="1"/>
</dbReference>
<keyword id="KW-0963">Cytoplasm</keyword>
<keyword id="KW-0396">Initiation factor</keyword>
<keyword id="KW-0648">Protein biosynthesis</keyword>
<keyword id="KW-1185">Reference proteome</keyword>
<sequence>MPPRPRFDRRAPVRELPNINERINYPQLRVVDADGTQLGVIDREKALEVAQERELDLVLVSEKADPPVCRIMDYGKYKFEQEKKAKEAKKKSHQTEVKEVKMRYKIDQHDYDVRIGQAQRFLKAGDKVKCTVIFRGREIQHTALAETLLRRMAKDLEEPAEIQQPPKREGRNMIMFLTPRKTPLVKKDDKEEPATRAVRTITAPPRPTSARLASKPAGNG</sequence>
<comment type="function">
    <text evidence="1">IF-3 binds to the 30S ribosomal subunit and shifts the equilibrium between 70S ribosomes and their 50S and 30S subunits in favor of the free subunits, thus enhancing the availability of 30S subunits on which protein synthesis initiation begins.</text>
</comment>
<comment type="subunit">
    <text evidence="1">Monomer.</text>
</comment>
<comment type="subcellular location">
    <subcellularLocation>
        <location evidence="1">Cytoplasm</location>
    </subcellularLocation>
</comment>
<comment type="similarity">
    <text evidence="1">Belongs to the IF-3 family.</text>
</comment>
<protein>
    <recommendedName>
        <fullName evidence="1">Translation initiation factor IF-3</fullName>
    </recommendedName>
</protein>